<gene>
    <name evidence="1" type="primary">serS</name>
    <name type="ordered locus">YN1551_1302</name>
</gene>
<evidence type="ECO:0000255" key="1">
    <source>
        <dbReference type="HAMAP-Rule" id="MF_00176"/>
    </source>
</evidence>
<name>SYS_SACI1</name>
<accession>C3NGY7</accession>
<dbReference type="EC" id="6.1.1.11" evidence="1"/>
<dbReference type="EMBL" id="CP001404">
    <property type="protein sequence ID" value="ACP48397.1"/>
    <property type="molecule type" value="Genomic_DNA"/>
</dbReference>
<dbReference type="RefSeq" id="WP_012713805.1">
    <property type="nucleotide sequence ID" value="NC_012623.1"/>
</dbReference>
<dbReference type="SMR" id="C3NGY7"/>
<dbReference type="GeneID" id="84058936"/>
<dbReference type="KEGG" id="sin:YN1551_1302"/>
<dbReference type="HOGENOM" id="CLU_023797_0_1_2"/>
<dbReference type="UniPathway" id="UPA00906">
    <property type="reaction ID" value="UER00895"/>
</dbReference>
<dbReference type="Proteomes" id="UP000006818">
    <property type="component" value="Chromosome"/>
</dbReference>
<dbReference type="GO" id="GO:0005737">
    <property type="term" value="C:cytoplasm"/>
    <property type="evidence" value="ECO:0007669"/>
    <property type="project" value="UniProtKB-SubCell"/>
</dbReference>
<dbReference type="GO" id="GO:0005524">
    <property type="term" value="F:ATP binding"/>
    <property type="evidence" value="ECO:0007669"/>
    <property type="project" value="UniProtKB-UniRule"/>
</dbReference>
<dbReference type="GO" id="GO:0004828">
    <property type="term" value="F:serine-tRNA ligase activity"/>
    <property type="evidence" value="ECO:0007669"/>
    <property type="project" value="UniProtKB-UniRule"/>
</dbReference>
<dbReference type="GO" id="GO:0016260">
    <property type="term" value="P:selenocysteine biosynthetic process"/>
    <property type="evidence" value="ECO:0007669"/>
    <property type="project" value="UniProtKB-UniRule"/>
</dbReference>
<dbReference type="GO" id="GO:0006434">
    <property type="term" value="P:seryl-tRNA aminoacylation"/>
    <property type="evidence" value="ECO:0007669"/>
    <property type="project" value="UniProtKB-UniRule"/>
</dbReference>
<dbReference type="CDD" id="cd00770">
    <property type="entry name" value="SerRS_core"/>
    <property type="match status" value="1"/>
</dbReference>
<dbReference type="FunFam" id="1.10.287.40:FF:000004">
    <property type="entry name" value="Serine--tRNA ligase"/>
    <property type="match status" value="1"/>
</dbReference>
<dbReference type="FunFam" id="3.30.930.10:FF:000048">
    <property type="entry name" value="Serine--tRNA ligase"/>
    <property type="match status" value="1"/>
</dbReference>
<dbReference type="Gene3D" id="3.30.930.10">
    <property type="entry name" value="Bira Bifunctional Protein, Domain 2"/>
    <property type="match status" value="1"/>
</dbReference>
<dbReference type="Gene3D" id="1.10.287.40">
    <property type="entry name" value="Serine-tRNA synthetase, tRNA binding domain"/>
    <property type="match status" value="1"/>
</dbReference>
<dbReference type="HAMAP" id="MF_00176">
    <property type="entry name" value="Ser_tRNA_synth_type1"/>
    <property type="match status" value="1"/>
</dbReference>
<dbReference type="InterPro" id="IPR002314">
    <property type="entry name" value="aa-tRNA-synt_IIb"/>
</dbReference>
<dbReference type="InterPro" id="IPR006195">
    <property type="entry name" value="aa-tRNA-synth_II"/>
</dbReference>
<dbReference type="InterPro" id="IPR045864">
    <property type="entry name" value="aa-tRNA-synth_II/BPL/LPL"/>
</dbReference>
<dbReference type="InterPro" id="IPR002317">
    <property type="entry name" value="Ser-tRNA-ligase_type_1"/>
</dbReference>
<dbReference type="InterPro" id="IPR015866">
    <property type="entry name" value="Ser-tRNA-synth_1_N"/>
</dbReference>
<dbReference type="InterPro" id="IPR042103">
    <property type="entry name" value="SerRS_1_N_sf"/>
</dbReference>
<dbReference type="InterPro" id="IPR033729">
    <property type="entry name" value="SerRS_core"/>
</dbReference>
<dbReference type="InterPro" id="IPR010978">
    <property type="entry name" value="tRNA-bd_arm"/>
</dbReference>
<dbReference type="NCBIfam" id="TIGR00414">
    <property type="entry name" value="serS"/>
    <property type="match status" value="1"/>
</dbReference>
<dbReference type="PANTHER" id="PTHR11778">
    <property type="entry name" value="SERYL-TRNA SYNTHETASE"/>
    <property type="match status" value="1"/>
</dbReference>
<dbReference type="Pfam" id="PF02403">
    <property type="entry name" value="Seryl_tRNA_N"/>
    <property type="match status" value="1"/>
</dbReference>
<dbReference type="Pfam" id="PF00587">
    <property type="entry name" value="tRNA-synt_2b"/>
    <property type="match status" value="1"/>
</dbReference>
<dbReference type="PIRSF" id="PIRSF001529">
    <property type="entry name" value="Ser-tRNA-synth_IIa"/>
    <property type="match status" value="1"/>
</dbReference>
<dbReference type="PRINTS" id="PR00981">
    <property type="entry name" value="TRNASYNTHSER"/>
</dbReference>
<dbReference type="SUPFAM" id="SSF55681">
    <property type="entry name" value="Class II aaRS and biotin synthetases"/>
    <property type="match status" value="1"/>
</dbReference>
<dbReference type="SUPFAM" id="SSF46589">
    <property type="entry name" value="tRNA-binding arm"/>
    <property type="match status" value="1"/>
</dbReference>
<dbReference type="PROSITE" id="PS50862">
    <property type="entry name" value="AA_TRNA_LIGASE_II"/>
    <property type="match status" value="1"/>
</dbReference>
<reference key="1">
    <citation type="journal article" date="2009" name="Proc. Natl. Acad. Sci. U.S.A.">
        <title>Biogeography of the Sulfolobus islandicus pan-genome.</title>
        <authorList>
            <person name="Reno M.L."/>
            <person name="Held N.L."/>
            <person name="Fields C.J."/>
            <person name="Burke P.V."/>
            <person name="Whitaker R.J."/>
        </authorList>
    </citation>
    <scope>NUCLEOTIDE SEQUENCE [LARGE SCALE GENOMIC DNA]</scope>
    <source>
        <strain>Y.N.15.51 / Yellowstone #2</strain>
    </source>
</reference>
<proteinExistence type="inferred from homology"/>
<protein>
    <recommendedName>
        <fullName evidence="1">Serine--tRNA ligase</fullName>
        <ecNumber evidence="1">6.1.1.11</ecNumber>
    </recommendedName>
    <alternativeName>
        <fullName evidence="1">Seryl-tRNA synthetase</fullName>
        <shortName evidence="1">SerRS</shortName>
    </alternativeName>
    <alternativeName>
        <fullName evidence="1">Seryl-tRNA(Ser/Sec) synthetase</fullName>
    </alternativeName>
</protein>
<keyword id="KW-0030">Aminoacyl-tRNA synthetase</keyword>
<keyword id="KW-0067">ATP-binding</keyword>
<keyword id="KW-0963">Cytoplasm</keyword>
<keyword id="KW-0436">Ligase</keyword>
<keyword id="KW-0547">Nucleotide-binding</keyword>
<keyword id="KW-0648">Protein biosynthesis</keyword>
<comment type="function">
    <text evidence="1">Catalyzes the attachment of serine to tRNA(Ser). Is also able to aminoacylate tRNA(Sec) with serine, to form the misacylated tRNA L-seryl-tRNA(Sec), which will be further converted into selenocysteinyl-tRNA(Sec).</text>
</comment>
<comment type="catalytic activity">
    <reaction evidence="1">
        <text>tRNA(Ser) + L-serine + ATP = L-seryl-tRNA(Ser) + AMP + diphosphate + H(+)</text>
        <dbReference type="Rhea" id="RHEA:12292"/>
        <dbReference type="Rhea" id="RHEA-COMP:9669"/>
        <dbReference type="Rhea" id="RHEA-COMP:9703"/>
        <dbReference type="ChEBI" id="CHEBI:15378"/>
        <dbReference type="ChEBI" id="CHEBI:30616"/>
        <dbReference type="ChEBI" id="CHEBI:33019"/>
        <dbReference type="ChEBI" id="CHEBI:33384"/>
        <dbReference type="ChEBI" id="CHEBI:78442"/>
        <dbReference type="ChEBI" id="CHEBI:78533"/>
        <dbReference type="ChEBI" id="CHEBI:456215"/>
        <dbReference type="EC" id="6.1.1.11"/>
    </reaction>
</comment>
<comment type="catalytic activity">
    <reaction evidence="1">
        <text>tRNA(Sec) + L-serine + ATP = L-seryl-tRNA(Sec) + AMP + diphosphate + H(+)</text>
        <dbReference type="Rhea" id="RHEA:42580"/>
        <dbReference type="Rhea" id="RHEA-COMP:9742"/>
        <dbReference type="Rhea" id="RHEA-COMP:10128"/>
        <dbReference type="ChEBI" id="CHEBI:15378"/>
        <dbReference type="ChEBI" id="CHEBI:30616"/>
        <dbReference type="ChEBI" id="CHEBI:33019"/>
        <dbReference type="ChEBI" id="CHEBI:33384"/>
        <dbReference type="ChEBI" id="CHEBI:78442"/>
        <dbReference type="ChEBI" id="CHEBI:78533"/>
        <dbReference type="ChEBI" id="CHEBI:456215"/>
        <dbReference type="EC" id="6.1.1.11"/>
    </reaction>
</comment>
<comment type="pathway">
    <text evidence="1">Aminoacyl-tRNA biosynthesis; selenocysteinyl-tRNA(Sec) biosynthesis; L-seryl-tRNA(Sec) from L-serine and tRNA(Sec): step 1/1.</text>
</comment>
<comment type="subunit">
    <text evidence="1">Homodimer. The tRNA molecule binds across the dimer.</text>
</comment>
<comment type="subcellular location">
    <subcellularLocation>
        <location evidence="1">Cytoplasm</location>
    </subcellularLocation>
</comment>
<comment type="domain">
    <text evidence="1">Consists of two distinct domains, a catalytic core and a N-terminal extension that is involved in tRNA binding.</text>
</comment>
<comment type="similarity">
    <text evidence="1">Belongs to the class-II aminoacyl-tRNA synthetase family. Type-1 seryl-tRNA synthetase subfamily.</text>
</comment>
<organism>
    <name type="scientific">Saccharolobus islandicus (strain Y.N.15.51 / Yellowstone #2)</name>
    <name type="common">Sulfolobus islandicus</name>
    <dbReference type="NCBI Taxonomy" id="419942"/>
    <lineage>
        <taxon>Archaea</taxon>
        <taxon>Thermoproteota</taxon>
        <taxon>Thermoprotei</taxon>
        <taxon>Sulfolobales</taxon>
        <taxon>Sulfolobaceae</taxon>
        <taxon>Saccharolobus</taxon>
    </lineage>
</organism>
<feature type="chain" id="PRO_1000203773" description="Serine--tRNA ligase">
    <location>
        <begin position="1"/>
        <end position="457"/>
    </location>
</feature>
<feature type="binding site" evidence="1">
    <location>
        <begin position="252"/>
        <end position="254"/>
    </location>
    <ligand>
        <name>L-serine</name>
        <dbReference type="ChEBI" id="CHEBI:33384"/>
    </ligand>
</feature>
<feature type="binding site" evidence="1">
    <location>
        <begin position="283"/>
        <end position="285"/>
    </location>
    <ligand>
        <name>ATP</name>
        <dbReference type="ChEBI" id="CHEBI:30616"/>
    </ligand>
</feature>
<feature type="binding site" evidence="1">
    <location>
        <position position="299"/>
    </location>
    <ligand>
        <name>ATP</name>
        <dbReference type="ChEBI" id="CHEBI:30616"/>
    </ligand>
</feature>
<feature type="binding site" evidence="1">
    <location>
        <position position="306"/>
    </location>
    <ligand>
        <name>L-serine</name>
        <dbReference type="ChEBI" id="CHEBI:33384"/>
    </ligand>
</feature>
<feature type="binding site" evidence="1">
    <location>
        <begin position="370"/>
        <end position="373"/>
    </location>
    <ligand>
        <name>ATP</name>
        <dbReference type="ChEBI" id="CHEBI:30616"/>
    </ligand>
</feature>
<feature type="binding site" evidence="1">
    <location>
        <position position="406"/>
    </location>
    <ligand>
        <name>L-serine</name>
        <dbReference type="ChEBI" id="CHEBI:33384"/>
    </ligand>
</feature>
<sequence length="457" mass="53216">MSWSILEFLRKNPEELKNNLKRRAIDVSLVDKAVELDKKWRQVLQEVERLRHQHNVLSSQIPKLSGEERKKKIEESKNLLKILEDKEKELEKIEVERDRLLSSLPNLVADDVPNGPDDSYNIPIKFWGKFKVYEGDVEEFLRQTKDANVNYEIIKWKPKGHAEMLEDVLHLGNTLKAAEIAGSRFYYLFNDIVWLDFALLLFAIDYITQQGYTLVLPPYMLRGEVIQSVIDLDTFKDAIYKIENEDLYLIATAEHSIAAMFFKEEIEKDKLPLKFAGISPAFRKEAGAANKDLKGIFRVHQFHKVEQFIFSTPEDSWKYHAELITNAESIFQQLELPYRIVNIASGDLGACAAKKFDLEVWMPAQAKFREMVSCSNCTDWQAFRMKIRYVDRKNNKRGYVHTLNSTAIASTRTITAILENYQREDGVVEVPKVLRKYLEIFPKAPKDYIYPLKNKII</sequence>